<gene>
    <name evidence="1" type="primary">nagB</name>
    <name type="ordered locus">SPH_1546</name>
</gene>
<protein>
    <recommendedName>
        <fullName evidence="1">Glucosamine-6-phosphate deaminase</fullName>
        <ecNumber evidence="1">3.5.99.6</ecNumber>
    </recommendedName>
    <alternativeName>
        <fullName evidence="1">GlcN6P deaminase</fullName>
        <shortName evidence="1">GNPDA</shortName>
    </alternativeName>
    <alternativeName>
        <fullName evidence="1">Glucosamine-6-phosphate isomerase</fullName>
    </alternativeName>
</protein>
<name>NAGB_STRPI</name>
<organism>
    <name type="scientific">Streptococcus pneumoniae (strain Hungary19A-6)</name>
    <dbReference type="NCBI Taxonomy" id="487214"/>
    <lineage>
        <taxon>Bacteria</taxon>
        <taxon>Bacillati</taxon>
        <taxon>Bacillota</taxon>
        <taxon>Bacilli</taxon>
        <taxon>Lactobacillales</taxon>
        <taxon>Streptococcaceae</taxon>
        <taxon>Streptococcus</taxon>
    </lineage>
</organism>
<reference key="1">
    <citation type="journal article" date="2010" name="Genome Biol.">
        <title>Structure and dynamics of the pan-genome of Streptococcus pneumoniae and closely related species.</title>
        <authorList>
            <person name="Donati C."/>
            <person name="Hiller N.L."/>
            <person name="Tettelin H."/>
            <person name="Muzzi A."/>
            <person name="Croucher N.J."/>
            <person name="Angiuoli S.V."/>
            <person name="Oggioni M."/>
            <person name="Dunning Hotopp J.C."/>
            <person name="Hu F.Z."/>
            <person name="Riley D.R."/>
            <person name="Covacci A."/>
            <person name="Mitchell T.J."/>
            <person name="Bentley S.D."/>
            <person name="Kilian M."/>
            <person name="Ehrlich G.D."/>
            <person name="Rappuoli R."/>
            <person name="Moxon E.R."/>
            <person name="Masignani V."/>
        </authorList>
    </citation>
    <scope>NUCLEOTIDE SEQUENCE [LARGE SCALE GENOMIC DNA]</scope>
    <source>
        <strain>Hungary19A-6</strain>
    </source>
</reference>
<feature type="chain" id="PRO_1000139796" description="Glucosamine-6-phosphate deaminase">
    <location>
        <begin position="1"/>
        <end position="235"/>
    </location>
</feature>
<feature type="active site" description="Proton acceptor; for enolization step" evidence="1">
    <location>
        <position position="62"/>
    </location>
</feature>
<feature type="active site" description="For ring-opening step" evidence="1">
    <location>
        <position position="128"/>
    </location>
</feature>
<feature type="active site" description="Proton acceptor; for ring-opening step" evidence="1">
    <location>
        <position position="130"/>
    </location>
</feature>
<feature type="active site" description="For ring-opening step" evidence="1">
    <location>
        <position position="135"/>
    </location>
</feature>
<comment type="function">
    <text evidence="1">Catalyzes the reversible isomerization-deamination of glucosamine 6-phosphate (GlcN6P) to form fructose 6-phosphate (Fru6P) and ammonium ion.</text>
</comment>
<comment type="catalytic activity">
    <reaction evidence="1">
        <text>alpha-D-glucosamine 6-phosphate + H2O = beta-D-fructose 6-phosphate + NH4(+)</text>
        <dbReference type="Rhea" id="RHEA:12172"/>
        <dbReference type="ChEBI" id="CHEBI:15377"/>
        <dbReference type="ChEBI" id="CHEBI:28938"/>
        <dbReference type="ChEBI" id="CHEBI:57634"/>
        <dbReference type="ChEBI" id="CHEBI:75989"/>
        <dbReference type="EC" id="3.5.99.6"/>
    </reaction>
</comment>
<comment type="pathway">
    <text evidence="1">Amino-sugar metabolism; N-acetylneuraminate degradation; D-fructose 6-phosphate from N-acetylneuraminate: step 5/5.</text>
</comment>
<comment type="similarity">
    <text evidence="1">Belongs to the glucosamine/galactosamine-6-phosphate isomerase family. NagB subfamily.</text>
</comment>
<dbReference type="EC" id="3.5.99.6" evidence="1"/>
<dbReference type="EMBL" id="CP000936">
    <property type="protein sequence ID" value="ACA37234.1"/>
    <property type="molecule type" value="Genomic_DNA"/>
</dbReference>
<dbReference type="RefSeq" id="WP_000864617.1">
    <property type="nucleotide sequence ID" value="NC_010380.1"/>
</dbReference>
<dbReference type="SMR" id="B1ICL5"/>
<dbReference type="KEGG" id="spv:SPH_1546"/>
<dbReference type="HOGENOM" id="CLU_049611_1_0_9"/>
<dbReference type="UniPathway" id="UPA00629">
    <property type="reaction ID" value="UER00684"/>
</dbReference>
<dbReference type="Proteomes" id="UP000002163">
    <property type="component" value="Chromosome"/>
</dbReference>
<dbReference type="GO" id="GO:0005737">
    <property type="term" value="C:cytoplasm"/>
    <property type="evidence" value="ECO:0007669"/>
    <property type="project" value="TreeGrafter"/>
</dbReference>
<dbReference type="GO" id="GO:0004342">
    <property type="term" value="F:glucosamine-6-phosphate deaminase activity"/>
    <property type="evidence" value="ECO:0007669"/>
    <property type="project" value="UniProtKB-UniRule"/>
</dbReference>
<dbReference type="GO" id="GO:0042802">
    <property type="term" value="F:identical protein binding"/>
    <property type="evidence" value="ECO:0007669"/>
    <property type="project" value="TreeGrafter"/>
</dbReference>
<dbReference type="GO" id="GO:0005975">
    <property type="term" value="P:carbohydrate metabolic process"/>
    <property type="evidence" value="ECO:0007669"/>
    <property type="project" value="InterPro"/>
</dbReference>
<dbReference type="GO" id="GO:0006043">
    <property type="term" value="P:glucosamine catabolic process"/>
    <property type="evidence" value="ECO:0007669"/>
    <property type="project" value="TreeGrafter"/>
</dbReference>
<dbReference type="GO" id="GO:0006046">
    <property type="term" value="P:N-acetylglucosamine catabolic process"/>
    <property type="evidence" value="ECO:0007669"/>
    <property type="project" value="TreeGrafter"/>
</dbReference>
<dbReference type="GO" id="GO:0019262">
    <property type="term" value="P:N-acetylneuraminate catabolic process"/>
    <property type="evidence" value="ECO:0007669"/>
    <property type="project" value="UniProtKB-UniRule"/>
</dbReference>
<dbReference type="CDD" id="cd01399">
    <property type="entry name" value="GlcN6P_deaminase"/>
    <property type="match status" value="1"/>
</dbReference>
<dbReference type="FunFam" id="3.40.50.1360:FF:000003">
    <property type="entry name" value="Glucosamine-6-phosphate deaminase"/>
    <property type="match status" value="1"/>
</dbReference>
<dbReference type="Gene3D" id="3.40.50.1360">
    <property type="match status" value="1"/>
</dbReference>
<dbReference type="HAMAP" id="MF_01241">
    <property type="entry name" value="GlcN6P_deamin"/>
    <property type="match status" value="1"/>
</dbReference>
<dbReference type="InterPro" id="IPR006148">
    <property type="entry name" value="Glc/Gal-6P_isomerase"/>
</dbReference>
<dbReference type="InterPro" id="IPR004547">
    <property type="entry name" value="Glucosamine6P_isomerase"/>
</dbReference>
<dbReference type="InterPro" id="IPR018321">
    <property type="entry name" value="Glucosamine6P_isomerase_CS"/>
</dbReference>
<dbReference type="InterPro" id="IPR037171">
    <property type="entry name" value="NagB/RpiA_transferase-like"/>
</dbReference>
<dbReference type="PANTHER" id="PTHR11280">
    <property type="entry name" value="GLUCOSAMINE-6-PHOSPHATE ISOMERASE"/>
    <property type="match status" value="1"/>
</dbReference>
<dbReference type="PANTHER" id="PTHR11280:SF5">
    <property type="entry name" value="GLUCOSAMINE-6-PHOSPHATE ISOMERASE"/>
    <property type="match status" value="1"/>
</dbReference>
<dbReference type="Pfam" id="PF01182">
    <property type="entry name" value="Glucosamine_iso"/>
    <property type="match status" value="1"/>
</dbReference>
<dbReference type="SUPFAM" id="SSF100950">
    <property type="entry name" value="NagB/RpiA/CoA transferase-like"/>
    <property type="match status" value="1"/>
</dbReference>
<dbReference type="PROSITE" id="PS01161">
    <property type="entry name" value="GLC_GALNAC_ISOMERASE"/>
    <property type="match status" value="1"/>
</dbReference>
<evidence type="ECO:0000255" key="1">
    <source>
        <dbReference type="HAMAP-Rule" id="MF_01241"/>
    </source>
</evidence>
<accession>B1ICL5</accession>
<proteinExistence type="inferred from homology"/>
<keyword id="KW-0119">Carbohydrate metabolism</keyword>
<keyword id="KW-0378">Hydrolase</keyword>
<sequence>MKVIKVENQVQGGKVAFEILKEKLANGAQTLGLATGSSPLEFYKEIVESDLDFSNLTSVNLDEYVGLDGDNPQSYRYFMQENLFNQKPFKESFLPRGVKDNAEAEVERYNQILADHPVDLQILGIGRNGHIGFNEPGTPFDSQTHLVELDQSTIEANARFFAKIEDVPTQAISMGIKNILDAKSIILFAYGESKAEAIAGTVSGPVTENLPASSLQNHPDVTIIADAEALSLLEK</sequence>